<protein>
    <recommendedName>
        <fullName>Carboxylesterase 1</fullName>
        <shortName>AeCXE1</shortName>
        <ecNumber>3.1.1.1</ecNumber>
    </recommendedName>
</protein>
<accession>Q0ZPV7</accession>
<comment type="function">
    <text evidence="2">Carboxylesterase acting on esters with varying acyl chain length.</text>
</comment>
<comment type="catalytic activity">
    <reaction evidence="2">
        <text>a carboxylic ester + H2O = an alcohol + a carboxylate + H(+)</text>
        <dbReference type="Rhea" id="RHEA:21164"/>
        <dbReference type="ChEBI" id="CHEBI:15377"/>
        <dbReference type="ChEBI" id="CHEBI:15378"/>
        <dbReference type="ChEBI" id="CHEBI:29067"/>
        <dbReference type="ChEBI" id="CHEBI:30879"/>
        <dbReference type="ChEBI" id="CHEBI:33308"/>
        <dbReference type="EC" id="3.1.1.1"/>
    </reaction>
</comment>
<comment type="activity regulation">
    <text evidence="2">Is inhibited by the organophosphates paraoxon and dimethylchlorophosphate (DMCP).</text>
</comment>
<comment type="biophysicochemical properties">
    <kinetics>
        <KM evidence="2">33.3 uM for 4-methylumbelliferyl acetate</KM>
        <KM evidence="2">16.7 uM for 4-methylumbelliferyl butyrate</KM>
        <KM evidence="2">19.1 uM for 4-methylumbelliferyl heptanoate</KM>
        <KM evidence="2">6.34 uM for 4-methylumbelliferyl octanoate</KM>
        <KM evidence="2">0.117 uM for 4-methylumbelliferyl laureate</KM>
        <KM evidence="2">0.024 uM for 4-methylumbelliferyl palmitate</KM>
    </kinetics>
</comment>
<comment type="similarity">
    <text evidence="3">Belongs to the 'GDXG' lipolytic enzyme family.</text>
</comment>
<gene>
    <name type="primary">CXE1</name>
</gene>
<evidence type="ECO:0000250" key="1">
    <source>
        <dbReference type="UniProtKB" id="Q5NUF3"/>
    </source>
</evidence>
<evidence type="ECO:0000269" key="2">
    <source>
    </source>
</evidence>
<evidence type="ECO:0000305" key="3"/>
<evidence type="ECO:0000305" key="4">
    <source>
    </source>
</evidence>
<evidence type="ECO:0007744" key="5">
    <source>
        <dbReference type="PDB" id="2O7V"/>
    </source>
</evidence>
<evidence type="ECO:0007829" key="6">
    <source>
        <dbReference type="PDB" id="2O7R"/>
    </source>
</evidence>
<reference key="1">
    <citation type="submission" date="2005-11" db="EMBL/GenBank/DDBJ databases">
        <title>Biochemical characterization and comparison of plant CXE carboxylesterases from Actinidia spp., Arabidopsis thaliana, and Malus pumila.</title>
        <authorList>
            <person name="Marshall S.D."/>
            <person name="Oakeshott J.G."/>
            <person name="Russell R.J."/>
            <person name="Plummer K.M."/>
            <person name="Newcomb R.D."/>
        </authorList>
    </citation>
    <scope>NUCLEOTIDE SEQUENCE [MRNA]</scope>
</reference>
<reference key="2">
    <citation type="journal article" date="2007" name="Biochemistry">
        <title>High-resolution crystal structure of plant carboxylesterase AeCXE1, from Actinidia eriantha, and its complex with a high-affinity inhibitor paraoxon.</title>
        <authorList>
            <person name="Ileperuma N.R."/>
            <person name="Marshall S.D."/>
            <person name="Squire C.J."/>
            <person name="Baker H.M."/>
            <person name="Oakeshott J.G."/>
            <person name="Russell R.J."/>
            <person name="Plummer K.M."/>
            <person name="Newcomb R.D."/>
            <person name="Baker E.N."/>
        </authorList>
    </citation>
    <scope>X-RAY CRYSTALLOGRAPHY (1.40 ANGSTROMS) OF NATIVE ENZYME AND COMPLEX WITH PARAOXON INHIBITOR</scope>
    <scope>FUNCTION</scope>
    <scope>CATALYTIC ACTIVITY</scope>
    <scope>BIOPHYSICOCHEMICAL PROPERTIES</scope>
    <scope>ACTIVITY REGULATION</scope>
</reference>
<proteinExistence type="evidence at protein level"/>
<sequence length="335" mass="37052">MSNDHLETTGSSDPNTNLLKYLPIVLNPDRTITRPIQIPSTAASPDPTSSSPVLTKDLALNPLHNTFVRLFLPRHALYNSAKLPLVVYFHGGGFILFSAASTIFHDFCCEMAVHAGVVIASVDYRLAPEHRLPAAYDDAMEALQWIKDSRDEWLTNFADFSNCFIMGESAGGNIAYHAGLRAAAVADELLPLKIKGLVLDEPGFGGSKRTGSELRLANDSRLPTFVLDLIWELSLPMGADRDHEYCNPTAESEPLYSFDKIRSLGWRVMVVGCHGDPMIDRQMELAERLEKKGVDVVAQFDVGGYHAVKLEDPEKAKQFFVILKKFVVDSCTTKL</sequence>
<organism>
    <name type="scientific">Actinidia eriantha</name>
    <name type="common">Velvet vine</name>
    <name type="synonym">Actinidia fulvicoma var. lanata</name>
    <dbReference type="NCBI Taxonomy" id="165200"/>
    <lineage>
        <taxon>Eukaryota</taxon>
        <taxon>Viridiplantae</taxon>
        <taxon>Streptophyta</taxon>
        <taxon>Embryophyta</taxon>
        <taxon>Tracheophyta</taxon>
        <taxon>Spermatophyta</taxon>
        <taxon>Magnoliopsida</taxon>
        <taxon>eudicotyledons</taxon>
        <taxon>Gunneridae</taxon>
        <taxon>Pentapetalae</taxon>
        <taxon>asterids</taxon>
        <taxon>Ericales</taxon>
        <taxon>Actinidiaceae</taxon>
        <taxon>Actinidia</taxon>
    </lineage>
</organism>
<keyword id="KW-0002">3D-structure</keyword>
<keyword id="KW-0378">Hydrolase</keyword>
<keyword id="KW-0719">Serine esterase</keyword>
<feature type="chain" id="PRO_0000403482" description="Carboxylesterase 1">
    <location>
        <begin position="1"/>
        <end position="335"/>
    </location>
</feature>
<feature type="short sequence motif" description="Involved in the stabilization of the negatively charged intermediate by the formation of the oxyanion hole" evidence="1">
    <location>
        <begin position="90"/>
        <end position="92"/>
    </location>
</feature>
<feature type="active site" evidence="3">
    <location>
        <position position="169"/>
    </location>
</feature>
<feature type="active site" evidence="3">
    <location>
        <position position="276"/>
    </location>
</feature>
<feature type="active site" evidence="3">
    <location>
        <position position="306"/>
    </location>
</feature>
<feature type="binding site" evidence="4 5">
    <location>
        <begin position="92"/>
        <end position="93"/>
    </location>
    <ligand>
        <name>paraoxon</name>
        <dbReference type="ChEBI" id="CHEBI:27827"/>
        <note>inhibitor</note>
    </ligand>
</feature>
<feature type="binding site" description="covalent" evidence="4 5">
    <location>
        <position position="169"/>
    </location>
    <ligand>
        <name>paraoxon</name>
        <dbReference type="ChEBI" id="CHEBI:27827"/>
        <note>inhibitor</note>
    </ligand>
</feature>
<feature type="binding site" evidence="4 5">
    <location>
        <position position="170"/>
    </location>
    <ligand>
        <name>paraoxon</name>
        <dbReference type="ChEBI" id="CHEBI:27827"/>
        <note>inhibitor</note>
    </ligand>
</feature>
<feature type="turn" evidence="6">
    <location>
        <begin position="19"/>
        <end position="21"/>
    </location>
</feature>
<feature type="strand" evidence="6">
    <location>
        <begin position="52"/>
        <end position="61"/>
    </location>
</feature>
<feature type="turn" evidence="6">
    <location>
        <begin position="62"/>
        <end position="65"/>
    </location>
</feature>
<feature type="strand" evidence="6">
    <location>
        <begin position="66"/>
        <end position="73"/>
    </location>
</feature>
<feature type="helix" evidence="6">
    <location>
        <begin position="74"/>
        <end position="78"/>
    </location>
</feature>
<feature type="strand" evidence="6">
    <location>
        <begin position="83"/>
        <end position="89"/>
    </location>
</feature>
<feature type="turn" evidence="6">
    <location>
        <begin position="93"/>
        <end position="95"/>
    </location>
</feature>
<feature type="helix" evidence="6">
    <location>
        <begin position="102"/>
        <end position="115"/>
    </location>
</feature>
<feature type="strand" evidence="6">
    <location>
        <begin position="118"/>
        <end position="123"/>
    </location>
</feature>
<feature type="turn" evidence="6">
    <location>
        <begin position="127"/>
        <end position="130"/>
    </location>
</feature>
<feature type="helix" evidence="6">
    <location>
        <begin position="134"/>
        <end position="147"/>
    </location>
</feature>
<feature type="helix" evidence="6">
    <location>
        <begin position="152"/>
        <end position="157"/>
    </location>
</feature>
<feature type="strand" evidence="6">
    <location>
        <begin position="158"/>
        <end position="168"/>
    </location>
</feature>
<feature type="helix" evidence="6">
    <location>
        <begin position="170"/>
        <end position="183"/>
    </location>
</feature>
<feature type="helix" evidence="6">
    <location>
        <begin position="186"/>
        <end position="189"/>
    </location>
</feature>
<feature type="strand" evidence="6">
    <location>
        <begin position="194"/>
        <end position="201"/>
    </location>
</feature>
<feature type="helix" evidence="6">
    <location>
        <begin position="211"/>
        <end position="215"/>
    </location>
</feature>
<feature type="turn" evidence="6">
    <location>
        <begin position="216"/>
        <end position="218"/>
    </location>
</feature>
<feature type="strand" evidence="6">
    <location>
        <begin position="220"/>
        <end position="222"/>
    </location>
</feature>
<feature type="helix" evidence="6">
    <location>
        <begin position="224"/>
        <end position="234"/>
    </location>
</feature>
<feature type="turn" evidence="6">
    <location>
        <begin position="244"/>
        <end position="246"/>
    </location>
</feature>
<feature type="helix" evidence="6">
    <location>
        <begin position="257"/>
        <end position="264"/>
    </location>
</feature>
<feature type="strand" evidence="6">
    <location>
        <begin position="267"/>
        <end position="273"/>
    </location>
</feature>
<feature type="helix" evidence="6">
    <location>
        <begin position="279"/>
        <end position="291"/>
    </location>
</feature>
<feature type="strand" evidence="6">
    <location>
        <begin position="295"/>
        <end position="303"/>
    </location>
</feature>
<feature type="helix" evidence="6">
    <location>
        <begin position="308"/>
        <end position="310"/>
    </location>
</feature>
<feature type="helix" evidence="6">
    <location>
        <begin position="313"/>
        <end position="327"/>
    </location>
</feature>
<dbReference type="EC" id="3.1.1.1"/>
<dbReference type="EMBL" id="DQ279914">
    <property type="protein sequence ID" value="ABB89013.1"/>
    <property type="molecule type" value="mRNA"/>
</dbReference>
<dbReference type="PDB" id="2O7R">
    <property type="method" value="X-ray"/>
    <property type="resolution" value="1.40 A"/>
    <property type="chains" value="A=1-335"/>
</dbReference>
<dbReference type="PDB" id="2O7V">
    <property type="method" value="X-ray"/>
    <property type="resolution" value="2.30 A"/>
    <property type="chains" value="A=1-335"/>
</dbReference>
<dbReference type="PDBsum" id="2O7R"/>
<dbReference type="PDBsum" id="2O7V"/>
<dbReference type="SMR" id="Q0ZPV7"/>
<dbReference type="ESTHER" id="actde-CXE1">
    <property type="family name" value="Plant_carboxylesterase"/>
</dbReference>
<dbReference type="BRENDA" id="3.1.1.1">
    <property type="organism ID" value="9380"/>
</dbReference>
<dbReference type="SABIO-RK" id="Q0ZPV7"/>
<dbReference type="EvolutionaryTrace" id="Q0ZPV7"/>
<dbReference type="GO" id="GO:0106435">
    <property type="term" value="F:carboxylesterase activity"/>
    <property type="evidence" value="ECO:0007669"/>
    <property type="project" value="UniProtKB-EC"/>
</dbReference>
<dbReference type="Gene3D" id="3.40.50.1820">
    <property type="entry name" value="alpha/beta hydrolase"/>
    <property type="match status" value="1"/>
</dbReference>
<dbReference type="InterPro" id="IPR013094">
    <property type="entry name" value="AB_hydrolase_3"/>
</dbReference>
<dbReference type="InterPro" id="IPR029058">
    <property type="entry name" value="AB_hydrolase_fold"/>
</dbReference>
<dbReference type="InterPro" id="IPR050466">
    <property type="entry name" value="Carboxylest/Gibb_receptor"/>
</dbReference>
<dbReference type="InterPro" id="IPR002168">
    <property type="entry name" value="Lipase_GDXG_HIS_AS"/>
</dbReference>
<dbReference type="PANTHER" id="PTHR23024">
    <property type="entry name" value="ARYLACETAMIDE DEACETYLASE"/>
    <property type="match status" value="1"/>
</dbReference>
<dbReference type="PANTHER" id="PTHR23024:SF546">
    <property type="entry name" value="CARBOXYLESTERASE 120-RELATED"/>
    <property type="match status" value="1"/>
</dbReference>
<dbReference type="Pfam" id="PF07859">
    <property type="entry name" value="Abhydrolase_3"/>
    <property type="match status" value="1"/>
</dbReference>
<dbReference type="SUPFAM" id="SSF53474">
    <property type="entry name" value="alpha/beta-Hydrolases"/>
    <property type="match status" value="1"/>
</dbReference>
<dbReference type="PROSITE" id="PS01173">
    <property type="entry name" value="LIPASE_GDXG_HIS"/>
    <property type="match status" value="1"/>
</dbReference>
<name>CXE1_ACTER</name>